<comment type="function">
    <text evidence="1">Catalyzes the cyclization of GTP to (8S)-3',8-cyclo-7,8-dihydroguanosine 5'-triphosphate.</text>
</comment>
<comment type="catalytic activity">
    <reaction evidence="1">
        <text>GTP + AH2 + S-adenosyl-L-methionine = (8S)-3',8-cyclo-7,8-dihydroguanosine 5'-triphosphate + 5'-deoxyadenosine + L-methionine + A + H(+)</text>
        <dbReference type="Rhea" id="RHEA:49576"/>
        <dbReference type="ChEBI" id="CHEBI:13193"/>
        <dbReference type="ChEBI" id="CHEBI:15378"/>
        <dbReference type="ChEBI" id="CHEBI:17319"/>
        <dbReference type="ChEBI" id="CHEBI:17499"/>
        <dbReference type="ChEBI" id="CHEBI:37565"/>
        <dbReference type="ChEBI" id="CHEBI:57844"/>
        <dbReference type="ChEBI" id="CHEBI:59789"/>
        <dbReference type="ChEBI" id="CHEBI:131766"/>
        <dbReference type="EC" id="4.1.99.22"/>
    </reaction>
</comment>
<comment type="cofactor">
    <cofactor evidence="1">
        <name>[4Fe-4S] cluster</name>
        <dbReference type="ChEBI" id="CHEBI:49883"/>
    </cofactor>
    <text evidence="1">Binds 2 [4Fe-4S] clusters. Binds 1 [4Fe-4S] cluster coordinated with 3 cysteines and an exchangeable S-adenosyl-L-methionine and 1 [4Fe-4S] cluster coordinated with 3 cysteines and the GTP-derived substrate.</text>
</comment>
<comment type="pathway">
    <text evidence="1">Cofactor biosynthesis; molybdopterin biosynthesis.</text>
</comment>
<comment type="subunit">
    <text evidence="1">Monomer and homodimer.</text>
</comment>
<comment type="similarity">
    <text evidence="1">Belongs to the radical SAM superfamily. MoaA family.</text>
</comment>
<comment type="sequence caution" evidence="3">
    <conflict type="erroneous initiation">
        <sequence resource="EMBL-CDS" id="AAK47769"/>
    </conflict>
</comment>
<sequence length="378" mass="41721">MTRVFHPALSGPEQSRYQITDVASVSRSGLCINESPIRDRCGRTMGDLRLSVIDQCNLRCRYCMPEAEYAWLPRADLLSVDEISLIVDAFIAVGVDKIRLTGGEPLIRSDLAAIIEVISAKVGDGSGLQDLAITTNGVLLADQARKLKSAGMRRITISLDTLRPDRFKAISQRGTHYKVIEGIEAVAAAGFTDTKLDSVVIRGFNDDELSDLIEFARNVNAEVRFIEYMDVGGATQWSMDKVFTKAQMLSTLGKKYGPIAALPKYDSAPANRYRLPDGTTFGIIASTTEPFCATCDRSRLTADGIWLHCLYALSGINLRESVRAGASANDVVQILQRGWRDRANRGAEQRLAQRTRQVFLPVSRLKRDPHLEMHTRGG</sequence>
<accession>P62589</accession>
<accession>O53143</accession>
<proteinExistence type="inferred from homology"/>
<evidence type="ECO:0000255" key="1">
    <source>
        <dbReference type="HAMAP-Rule" id="MF_01225"/>
    </source>
</evidence>
<evidence type="ECO:0000255" key="2">
    <source>
        <dbReference type="PROSITE-ProRule" id="PRU01266"/>
    </source>
</evidence>
<evidence type="ECO:0000305" key="3"/>
<gene>
    <name evidence="1" type="primary">moaA3</name>
    <name type="ordered locus">MT3427</name>
</gene>
<name>MOAA3_MYCTO</name>
<protein>
    <recommendedName>
        <fullName evidence="1">GTP 3',8-cyclase 3</fullName>
        <ecNumber evidence="1">4.1.99.22</ecNumber>
    </recommendedName>
    <alternativeName>
        <fullName evidence="1">Molybdenum cofactor biosynthesis protein A 3</fullName>
    </alternativeName>
</protein>
<dbReference type="EC" id="4.1.99.22" evidence="1"/>
<dbReference type="EMBL" id="Y16569">
    <property type="protein sequence ID" value="CAA76291.1"/>
    <property type="molecule type" value="Genomic_DNA"/>
</dbReference>
<dbReference type="EMBL" id="AE000516">
    <property type="protein sequence ID" value="AAK47769.1"/>
    <property type="status" value="ALT_INIT"/>
    <property type="molecule type" value="Genomic_DNA"/>
</dbReference>
<dbReference type="SMR" id="P62589"/>
<dbReference type="KEGG" id="mtc:MT3427"/>
<dbReference type="PATRIC" id="fig|83331.31.peg.3686"/>
<dbReference type="HOGENOM" id="CLU_009273_0_0_11"/>
<dbReference type="UniPathway" id="UPA00344"/>
<dbReference type="Proteomes" id="UP000001020">
    <property type="component" value="Chromosome"/>
</dbReference>
<dbReference type="GO" id="GO:0051539">
    <property type="term" value="F:4 iron, 4 sulfur cluster binding"/>
    <property type="evidence" value="ECO:0007669"/>
    <property type="project" value="UniProtKB-UniRule"/>
</dbReference>
<dbReference type="GO" id="GO:0061799">
    <property type="term" value="F:cyclic pyranopterin monophosphate synthase activity"/>
    <property type="evidence" value="ECO:0007669"/>
    <property type="project" value="TreeGrafter"/>
</dbReference>
<dbReference type="GO" id="GO:0061798">
    <property type="term" value="F:GTP 3',8'-cyclase activity"/>
    <property type="evidence" value="ECO:0007669"/>
    <property type="project" value="UniProtKB-UniRule"/>
</dbReference>
<dbReference type="GO" id="GO:0005525">
    <property type="term" value="F:GTP binding"/>
    <property type="evidence" value="ECO:0007669"/>
    <property type="project" value="UniProtKB-UniRule"/>
</dbReference>
<dbReference type="GO" id="GO:0046872">
    <property type="term" value="F:metal ion binding"/>
    <property type="evidence" value="ECO:0007669"/>
    <property type="project" value="UniProtKB-KW"/>
</dbReference>
<dbReference type="GO" id="GO:1904047">
    <property type="term" value="F:S-adenosyl-L-methionine binding"/>
    <property type="evidence" value="ECO:0007669"/>
    <property type="project" value="UniProtKB-UniRule"/>
</dbReference>
<dbReference type="GO" id="GO:0006777">
    <property type="term" value="P:Mo-molybdopterin cofactor biosynthetic process"/>
    <property type="evidence" value="ECO:0007669"/>
    <property type="project" value="UniProtKB-UniRule"/>
</dbReference>
<dbReference type="CDD" id="cd01335">
    <property type="entry name" value="Radical_SAM"/>
    <property type="match status" value="1"/>
</dbReference>
<dbReference type="CDD" id="cd21117">
    <property type="entry name" value="Twitch_MoaA"/>
    <property type="match status" value="1"/>
</dbReference>
<dbReference type="Gene3D" id="3.20.20.70">
    <property type="entry name" value="Aldolase class I"/>
    <property type="match status" value="1"/>
</dbReference>
<dbReference type="HAMAP" id="MF_01225_B">
    <property type="entry name" value="MoaA_B"/>
    <property type="match status" value="1"/>
</dbReference>
<dbReference type="InterPro" id="IPR013785">
    <property type="entry name" value="Aldolase_TIM"/>
</dbReference>
<dbReference type="InterPro" id="IPR006638">
    <property type="entry name" value="Elp3/MiaA/NifB-like_rSAM"/>
</dbReference>
<dbReference type="InterPro" id="IPR013483">
    <property type="entry name" value="MoaA"/>
</dbReference>
<dbReference type="InterPro" id="IPR000385">
    <property type="entry name" value="MoaA_NifB_PqqE_Fe-S-bd_CS"/>
</dbReference>
<dbReference type="InterPro" id="IPR010505">
    <property type="entry name" value="MoaA_twitch"/>
</dbReference>
<dbReference type="InterPro" id="IPR050105">
    <property type="entry name" value="MoCo_biosynth_MoaA/MoaC"/>
</dbReference>
<dbReference type="InterPro" id="IPR007197">
    <property type="entry name" value="rSAM"/>
</dbReference>
<dbReference type="NCBIfam" id="TIGR02666">
    <property type="entry name" value="moaA"/>
    <property type="match status" value="1"/>
</dbReference>
<dbReference type="PANTHER" id="PTHR22960:SF0">
    <property type="entry name" value="MOLYBDENUM COFACTOR BIOSYNTHESIS PROTEIN 1"/>
    <property type="match status" value="1"/>
</dbReference>
<dbReference type="PANTHER" id="PTHR22960">
    <property type="entry name" value="MOLYBDOPTERIN COFACTOR SYNTHESIS PROTEIN A"/>
    <property type="match status" value="1"/>
</dbReference>
<dbReference type="Pfam" id="PF06463">
    <property type="entry name" value="Mob_synth_C"/>
    <property type="match status" value="1"/>
</dbReference>
<dbReference type="Pfam" id="PF04055">
    <property type="entry name" value="Radical_SAM"/>
    <property type="match status" value="1"/>
</dbReference>
<dbReference type="SFLD" id="SFLDG01383">
    <property type="entry name" value="cyclic_pyranopterin_phosphate"/>
    <property type="match status" value="1"/>
</dbReference>
<dbReference type="SFLD" id="SFLDG01216">
    <property type="entry name" value="thioether_bond_formation_requi"/>
    <property type="match status" value="1"/>
</dbReference>
<dbReference type="SMART" id="SM00729">
    <property type="entry name" value="Elp3"/>
    <property type="match status" value="1"/>
</dbReference>
<dbReference type="SUPFAM" id="SSF102114">
    <property type="entry name" value="Radical SAM enzymes"/>
    <property type="match status" value="1"/>
</dbReference>
<dbReference type="PROSITE" id="PS01305">
    <property type="entry name" value="MOAA_NIFB_PQQE"/>
    <property type="match status" value="1"/>
</dbReference>
<dbReference type="PROSITE" id="PS51918">
    <property type="entry name" value="RADICAL_SAM"/>
    <property type="match status" value="1"/>
</dbReference>
<keyword id="KW-0004">4Fe-4S</keyword>
<keyword id="KW-0342">GTP-binding</keyword>
<keyword id="KW-0408">Iron</keyword>
<keyword id="KW-0411">Iron-sulfur</keyword>
<keyword id="KW-0456">Lyase</keyword>
<keyword id="KW-0479">Metal-binding</keyword>
<keyword id="KW-0501">Molybdenum cofactor biosynthesis</keyword>
<keyword id="KW-0547">Nucleotide-binding</keyword>
<keyword id="KW-1185">Reference proteome</keyword>
<keyword id="KW-0949">S-adenosyl-L-methionine</keyword>
<feature type="chain" id="PRO_0000152978" description="GTP 3',8-cyclase 3">
    <location>
        <begin position="1"/>
        <end position="378"/>
    </location>
</feature>
<feature type="domain" description="Radical SAM core" evidence="2">
    <location>
        <begin position="40"/>
        <end position="259"/>
    </location>
</feature>
<feature type="binding site" evidence="1">
    <location>
        <position position="49"/>
    </location>
    <ligand>
        <name>GTP</name>
        <dbReference type="ChEBI" id="CHEBI:37565"/>
    </ligand>
</feature>
<feature type="binding site" evidence="1">
    <location>
        <position position="56"/>
    </location>
    <ligand>
        <name>[4Fe-4S] cluster</name>
        <dbReference type="ChEBI" id="CHEBI:49883"/>
        <label>1</label>
        <note>4Fe-4S-S-AdoMet</note>
    </ligand>
</feature>
<feature type="binding site" evidence="1">
    <location>
        <position position="60"/>
    </location>
    <ligand>
        <name>[4Fe-4S] cluster</name>
        <dbReference type="ChEBI" id="CHEBI:49883"/>
        <label>1</label>
        <note>4Fe-4S-S-AdoMet</note>
    </ligand>
</feature>
<feature type="binding site" evidence="1">
    <location>
        <position position="62"/>
    </location>
    <ligand>
        <name>S-adenosyl-L-methionine</name>
        <dbReference type="ChEBI" id="CHEBI:59789"/>
    </ligand>
</feature>
<feature type="binding site" evidence="1">
    <location>
        <position position="63"/>
    </location>
    <ligand>
        <name>[4Fe-4S] cluster</name>
        <dbReference type="ChEBI" id="CHEBI:49883"/>
        <label>1</label>
        <note>4Fe-4S-S-AdoMet</note>
    </ligand>
</feature>
<feature type="binding site" evidence="1">
    <location>
        <position position="99"/>
    </location>
    <ligand>
        <name>GTP</name>
        <dbReference type="ChEBI" id="CHEBI:37565"/>
    </ligand>
</feature>
<feature type="binding site" evidence="1">
    <location>
        <position position="103"/>
    </location>
    <ligand>
        <name>S-adenosyl-L-methionine</name>
        <dbReference type="ChEBI" id="CHEBI:59789"/>
    </ligand>
</feature>
<feature type="binding site" evidence="1">
    <location>
        <position position="134"/>
    </location>
    <ligand>
        <name>GTP</name>
        <dbReference type="ChEBI" id="CHEBI:37565"/>
    </ligand>
</feature>
<feature type="binding site" evidence="1">
    <location>
        <position position="158"/>
    </location>
    <ligand>
        <name>S-adenosyl-L-methionine</name>
        <dbReference type="ChEBI" id="CHEBI:59789"/>
    </ligand>
</feature>
<feature type="binding site" evidence="1">
    <location>
        <position position="195"/>
    </location>
    <ligand>
        <name>GTP</name>
        <dbReference type="ChEBI" id="CHEBI:37565"/>
    </ligand>
</feature>
<feature type="binding site" evidence="1">
    <location>
        <position position="229"/>
    </location>
    <ligand>
        <name>S-adenosyl-L-methionine</name>
        <dbReference type="ChEBI" id="CHEBI:59789"/>
    </ligand>
</feature>
<feature type="binding site" evidence="1">
    <location>
        <position position="292"/>
    </location>
    <ligand>
        <name>[4Fe-4S] cluster</name>
        <dbReference type="ChEBI" id="CHEBI:49883"/>
        <label>2</label>
        <note>4Fe-4S-substrate</note>
    </ligand>
</feature>
<feature type="binding site" evidence="1">
    <location>
        <position position="295"/>
    </location>
    <ligand>
        <name>[4Fe-4S] cluster</name>
        <dbReference type="ChEBI" id="CHEBI:49883"/>
        <label>2</label>
        <note>4Fe-4S-substrate</note>
    </ligand>
</feature>
<feature type="binding site" evidence="1">
    <location>
        <begin position="297"/>
        <end position="299"/>
    </location>
    <ligand>
        <name>GTP</name>
        <dbReference type="ChEBI" id="CHEBI:37565"/>
    </ligand>
</feature>
<feature type="binding site" evidence="1">
    <location>
        <position position="309"/>
    </location>
    <ligand>
        <name>[4Fe-4S] cluster</name>
        <dbReference type="ChEBI" id="CHEBI:49883"/>
        <label>2</label>
        <note>4Fe-4S-substrate</note>
    </ligand>
</feature>
<organism>
    <name type="scientific">Mycobacterium tuberculosis (strain CDC 1551 / Oshkosh)</name>
    <dbReference type="NCBI Taxonomy" id="83331"/>
    <lineage>
        <taxon>Bacteria</taxon>
        <taxon>Bacillati</taxon>
        <taxon>Actinomycetota</taxon>
        <taxon>Actinomycetes</taxon>
        <taxon>Mycobacteriales</taxon>
        <taxon>Mycobacteriaceae</taxon>
        <taxon>Mycobacterium</taxon>
        <taxon>Mycobacterium tuberculosis complex</taxon>
    </lineage>
</organism>
<reference key="1">
    <citation type="submission" date="1998-02" db="EMBL/GenBank/DDBJ databases">
        <authorList>
            <person name="Fang Z."/>
        </authorList>
    </citation>
    <scope>NUCLEOTIDE SEQUENCE [GENOMIC DNA]</scope>
    <source>
        <strain>F4</strain>
    </source>
</reference>
<reference key="2">
    <citation type="journal article" date="2002" name="J. Bacteriol.">
        <title>Whole-genome comparison of Mycobacterium tuberculosis clinical and laboratory strains.</title>
        <authorList>
            <person name="Fleischmann R.D."/>
            <person name="Alland D."/>
            <person name="Eisen J.A."/>
            <person name="Carpenter L."/>
            <person name="White O."/>
            <person name="Peterson J.D."/>
            <person name="DeBoy R.T."/>
            <person name="Dodson R.J."/>
            <person name="Gwinn M.L."/>
            <person name="Haft D.H."/>
            <person name="Hickey E.K."/>
            <person name="Kolonay J.F."/>
            <person name="Nelson W.C."/>
            <person name="Umayam L.A."/>
            <person name="Ermolaeva M.D."/>
            <person name="Salzberg S.L."/>
            <person name="Delcher A."/>
            <person name="Utterback T.R."/>
            <person name="Weidman J.F."/>
            <person name="Khouri H.M."/>
            <person name="Gill J."/>
            <person name="Mikula A."/>
            <person name="Bishai W."/>
            <person name="Jacobs W.R. Jr."/>
            <person name="Venter J.C."/>
            <person name="Fraser C.M."/>
        </authorList>
    </citation>
    <scope>NUCLEOTIDE SEQUENCE [LARGE SCALE GENOMIC DNA]</scope>
    <source>
        <strain>CDC 1551 / Oshkosh</strain>
    </source>
</reference>